<feature type="transit peptide" description="Chloroplast" evidence="2">
    <location>
        <begin position="1"/>
        <end position="46"/>
    </location>
</feature>
<feature type="chain" id="PRO_0000430866" description="Probable fructokinase-6, chloroplastic">
    <location>
        <begin position="47"/>
        <end position="384"/>
    </location>
</feature>
<feature type="region of interest" description="Disordered" evidence="4">
    <location>
        <begin position="34"/>
        <end position="61"/>
    </location>
</feature>
<feature type="compositionally biased region" description="Low complexity" evidence="4">
    <location>
        <begin position="35"/>
        <end position="48"/>
    </location>
</feature>
<feature type="sequence conflict" description="In Ref. 3; BX816698." evidence="5" ref="3">
    <original>S</original>
    <variation>R</variation>
    <location>
        <position position="304"/>
    </location>
</feature>
<sequence length="384" mass="41471">MALQATTTTFCFSGPTFRSTPHSLTSKRPISIKATTSSPSRLSNSRSNLKGRALSSDGSTQESPYVVCFGEMLIDFVPTTSGLSLADAPAFKKAPGGAPANVAVGIARLGGSSAFIGKVGEDEFGYMLANILKDNNVNNDGMRFDPGARTALAFVTLTNEGEREFMFYRNPSADMLLEESELDFDLIKKAKIFHYGSISLITEPCKSAHISAAKAAKEAGVILSYDPNLRLPLWPSADNAREEILSIWETADIIKISEEEIVFLTKGEDPYDDNVVRKLFHPKLKLLLVTEGPEGCRYYTKDFSGRVHGLKVDVVDTTGAGDAFVAGILSQLANDLSLLQDEERLREALMFANACGALTVKVRGAIPALPTKEAVHEALLKAVV</sequence>
<evidence type="ECO:0000250" key="1">
    <source>
        <dbReference type="UniProtKB" id="Q6XZ79"/>
    </source>
</evidence>
<evidence type="ECO:0000255" key="2"/>
<evidence type="ECO:0000255" key="3">
    <source>
        <dbReference type="RuleBase" id="RU003704"/>
    </source>
</evidence>
<evidence type="ECO:0000256" key="4">
    <source>
        <dbReference type="SAM" id="MobiDB-lite"/>
    </source>
</evidence>
<evidence type="ECO:0000305" key="5"/>
<evidence type="ECO:0000312" key="6">
    <source>
        <dbReference type="Araport" id="AT1G66430"/>
    </source>
</evidence>
<evidence type="ECO:0000312" key="7">
    <source>
        <dbReference type="EMBL" id="AAG51160.1"/>
    </source>
</evidence>
<evidence type="ECO:0000312" key="8">
    <source>
        <dbReference type="EMBL" id="AAG52172.1"/>
    </source>
</evidence>
<dbReference type="EC" id="2.7.1.4"/>
<dbReference type="EMBL" id="AC020665">
    <property type="protein sequence ID" value="AAG52172.1"/>
    <property type="molecule type" value="Genomic_DNA"/>
</dbReference>
<dbReference type="EMBL" id="AC074025">
    <property type="protein sequence ID" value="AAG51160.1"/>
    <property type="molecule type" value="Genomic_DNA"/>
</dbReference>
<dbReference type="EMBL" id="CP002684">
    <property type="protein sequence ID" value="AEE34508.1"/>
    <property type="molecule type" value="Genomic_DNA"/>
</dbReference>
<dbReference type="EMBL" id="BX816698">
    <property type="status" value="NOT_ANNOTATED_CDS"/>
    <property type="molecule type" value="mRNA"/>
</dbReference>
<dbReference type="EMBL" id="AF370329">
    <property type="protein sequence ID" value="AAK44144.2"/>
    <property type="molecule type" value="mRNA"/>
</dbReference>
<dbReference type="EMBL" id="BT000889">
    <property type="protein sequence ID" value="AAN41289.1"/>
    <property type="molecule type" value="mRNA"/>
</dbReference>
<dbReference type="PIR" id="G96689">
    <property type="entry name" value="G96689"/>
</dbReference>
<dbReference type="RefSeq" id="NP_564875.2">
    <property type="nucleotide sequence ID" value="NM_105314.5"/>
</dbReference>
<dbReference type="SMR" id="Q9C524"/>
<dbReference type="BioGRID" id="28182">
    <property type="interactions" value="1"/>
</dbReference>
<dbReference type="FunCoup" id="Q9C524">
    <property type="interactions" value="683"/>
</dbReference>
<dbReference type="IntAct" id="Q9C524">
    <property type="interactions" value="2"/>
</dbReference>
<dbReference type="STRING" id="3702.Q9C524"/>
<dbReference type="PaxDb" id="3702-AT1G66430.1"/>
<dbReference type="ProteomicsDB" id="232963"/>
<dbReference type="EnsemblPlants" id="AT1G66430.1">
    <property type="protein sequence ID" value="AT1G66430.1"/>
    <property type="gene ID" value="AT1G66430"/>
</dbReference>
<dbReference type="GeneID" id="842961"/>
<dbReference type="Gramene" id="AT1G66430.1">
    <property type="protein sequence ID" value="AT1G66430.1"/>
    <property type="gene ID" value="AT1G66430"/>
</dbReference>
<dbReference type="KEGG" id="ath:AT1G66430"/>
<dbReference type="Araport" id="AT1G66430"/>
<dbReference type="TAIR" id="AT1G66430">
    <property type="gene designation" value="FRK3"/>
</dbReference>
<dbReference type="eggNOG" id="KOG2855">
    <property type="taxonomic scope" value="Eukaryota"/>
</dbReference>
<dbReference type="HOGENOM" id="CLU_027634_6_1_1"/>
<dbReference type="InParanoid" id="Q9C524"/>
<dbReference type="OMA" id="NWRPTFW"/>
<dbReference type="PhylomeDB" id="Q9C524"/>
<dbReference type="BioCyc" id="ARA:AT1G66430-MONOMER"/>
<dbReference type="BRENDA" id="2.7.1.4">
    <property type="organism ID" value="399"/>
</dbReference>
<dbReference type="UniPathway" id="UPA00152"/>
<dbReference type="PRO" id="PR:Q9C524"/>
<dbReference type="Proteomes" id="UP000006548">
    <property type="component" value="Chromosome 1"/>
</dbReference>
<dbReference type="ExpressionAtlas" id="Q9C524">
    <property type="expression patterns" value="baseline and differential"/>
</dbReference>
<dbReference type="GO" id="GO:0009507">
    <property type="term" value="C:chloroplast"/>
    <property type="evidence" value="ECO:0000314"/>
    <property type="project" value="TAIR"/>
</dbReference>
<dbReference type="GO" id="GO:0009570">
    <property type="term" value="C:chloroplast stroma"/>
    <property type="evidence" value="ECO:0007005"/>
    <property type="project" value="TAIR"/>
</dbReference>
<dbReference type="GO" id="GO:0005524">
    <property type="term" value="F:ATP binding"/>
    <property type="evidence" value="ECO:0007669"/>
    <property type="project" value="UniProtKB-KW"/>
</dbReference>
<dbReference type="GO" id="GO:0008865">
    <property type="term" value="F:fructokinase activity"/>
    <property type="evidence" value="ECO:0000314"/>
    <property type="project" value="TAIR"/>
</dbReference>
<dbReference type="GO" id="GO:0016051">
    <property type="term" value="P:carbohydrate biosynthetic process"/>
    <property type="evidence" value="ECO:0000316"/>
    <property type="project" value="TAIR"/>
</dbReference>
<dbReference type="GO" id="GO:0006633">
    <property type="term" value="P:fatty acid biosynthetic process"/>
    <property type="evidence" value="ECO:0000316"/>
    <property type="project" value="TAIR"/>
</dbReference>
<dbReference type="GO" id="GO:0006000">
    <property type="term" value="P:fructose metabolic process"/>
    <property type="evidence" value="ECO:0000314"/>
    <property type="project" value="TAIR"/>
</dbReference>
<dbReference type="GO" id="GO:0019252">
    <property type="term" value="P:starch biosynthetic process"/>
    <property type="evidence" value="ECO:0007669"/>
    <property type="project" value="UniProtKB-UniPathway"/>
</dbReference>
<dbReference type="CDD" id="cd01167">
    <property type="entry name" value="bac_FRK"/>
    <property type="match status" value="1"/>
</dbReference>
<dbReference type="FunFam" id="3.40.1190.20:FF:000005">
    <property type="entry name" value="Probable fructokinase-2"/>
    <property type="match status" value="1"/>
</dbReference>
<dbReference type="Gene3D" id="3.40.1190.20">
    <property type="match status" value="1"/>
</dbReference>
<dbReference type="InterPro" id="IPR002173">
    <property type="entry name" value="Carboh/pur_kinase_PfkB_CS"/>
</dbReference>
<dbReference type="InterPro" id="IPR050306">
    <property type="entry name" value="PfkB_Carbo_kinase"/>
</dbReference>
<dbReference type="InterPro" id="IPR011611">
    <property type="entry name" value="PfkB_dom"/>
</dbReference>
<dbReference type="InterPro" id="IPR002139">
    <property type="entry name" value="Ribo/fructo_kinase"/>
</dbReference>
<dbReference type="InterPro" id="IPR029056">
    <property type="entry name" value="Ribokinase-like"/>
</dbReference>
<dbReference type="PANTHER" id="PTHR43085">
    <property type="entry name" value="HEXOKINASE FAMILY MEMBER"/>
    <property type="match status" value="1"/>
</dbReference>
<dbReference type="PANTHER" id="PTHR43085:SF1">
    <property type="entry name" value="PSEUDOURIDINE KINASE-RELATED"/>
    <property type="match status" value="1"/>
</dbReference>
<dbReference type="Pfam" id="PF00294">
    <property type="entry name" value="PfkB"/>
    <property type="match status" value="1"/>
</dbReference>
<dbReference type="PRINTS" id="PR00990">
    <property type="entry name" value="RIBOKINASE"/>
</dbReference>
<dbReference type="SUPFAM" id="SSF53613">
    <property type="entry name" value="Ribokinase-like"/>
    <property type="match status" value="1"/>
</dbReference>
<dbReference type="PROSITE" id="PS00583">
    <property type="entry name" value="PFKB_KINASES_1"/>
    <property type="match status" value="1"/>
</dbReference>
<dbReference type="PROSITE" id="PS00584">
    <property type="entry name" value="PFKB_KINASES_2"/>
    <property type="match status" value="1"/>
</dbReference>
<reference key="1">
    <citation type="journal article" date="2000" name="Nature">
        <title>Sequence and analysis of chromosome 1 of the plant Arabidopsis thaliana.</title>
        <authorList>
            <person name="Theologis A."/>
            <person name="Ecker J.R."/>
            <person name="Palm C.J."/>
            <person name="Federspiel N.A."/>
            <person name="Kaul S."/>
            <person name="White O."/>
            <person name="Alonso J."/>
            <person name="Altafi H."/>
            <person name="Araujo R."/>
            <person name="Bowman C.L."/>
            <person name="Brooks S.Y."/>
            <person name="Buehler E."/>
            <person name="Chan A."/>
            <person name="Chao Q."/>
            <person name="Chen H."/>
            <person name="Cheuk R.F."/>
            <person name="Chin C.W."/>
            <person name="Chung M.K."/>
            <person name="Conn L."/>
            <person name="Conway A.B."/>
            <person name="Conway A.R."/>
            <person name="Creasy T.H."/>
            <person name="Dewar K."/>
            <person name="Dunn P."/>
            <person name="Etgu P."/>
            <person name="Feldblyum T.V."/>
            <person name="Feng J.-D."/>
            <person name="Fong B."/>
            <person name="Fujii C.Y."/>
            <person name="Gill J.E."/>
            <person name="Goldsmith A.D."/>
            <person name="Haas B."/>
            <person name="Hansen N.F."/>
            <person name="Hughes B."/>
            <person name="Huizar L."/>
            <person name="Hunter J.L."/>
            <person name="Jenkins J."/>
            <person name="Johnson-Hopson C."/>
            <person name="Khan S."/>
            <person name="Khaykin E."/>
            <person name="Kim C.J."/>
            <person name="Koo H.L."/>
            <person name="Kremenetskaia I."/>
            <person name="Kurtz D.B."/>
            <person name="Kwan A."/>
            <person name="Lam B."/>
            <person name="Langin-Hooper S."/>
            <person name="Lee A."/>
            <person name="Lee J.M."/>
            <person name="Lenz C.A."/>
            <person name="Li J.H."/>
            <person name="Li Y.-P."/>
            <person name="Lin X."/>
            <person name="Liu S.X."/>
            <person name="Liu Z.A."/>
            <person name="Luros J.S."/>
            <person name="Maiti R."/>
            <person name="Marziali A."/>
            <person name="Militscher J."/>
            <person name="Miranda M."/>
            <person name="Nguyen M."/>
            <person name="Nierman W.C."/>
            <person name="Osborne B.I."/>
            <person name="Pai G."/>
            <person name="Peterson J."/>
            <person name="Pham P.K."/>
            <person name="Rizzo M."/>
            <person name="Rooney T."/>
            <person name="Rowley D."/>
            <person name="Sakano H."/>
            <person name="Salzberg S.L."/>
            <person name="Schwartz J.R."/>
            <person name="Shinn P."/>
            <person name="Southwick A.M."/>
            <person name="Sun H."/>
            <person name="Tallon L.J."/>
            <person name="Tambunga G."/>
            <person name="Toriumi M.J."/>
            <person name="Town C.D."/>
            <person name="Utterback T."/>
            <person name="Van Aken S."/>
            <person name="Vaysberg M."/>
            <person name="Vysotskaia V.S."/>
            <person name="Walker M."/>
            <person name="Wu D."/>
            <person name="Yu G."/>
            <person name="Fraser C.M."/>
            <person name="Venter J.C."/>
            <person name="Davis R.W."/>
        </authorList>
    </citation>
    <scope>NUCLEOTIDE SEQUENCE [LARGE SCALE GENOMIC DNA]</scope>
    <source>
        <strain>cv. Columbia</strain>
    </source>
</reference>
<reference key="2">
    <citation type="journal article" date="2017" name="Plant J.">
        <title>Araport11: a complete reannotation of the Arabidopsis thaliana reference genome.</title>
        <authorList>
            <person name="Cheng C.Y."/>
            <person name="Krishnakumar V."/>
            <person name="Chan A.P."/>
            <person name="Thibaud-Nissen F."/>
            <person name="Schobel S."/>
            <person name="Town C.D."/>
        </authorList>
    </citation>
    <scope>GENOME REANNOTATION</scope>
    <source>
        <strain>cv. Columbia</strain>
    </source>
</reference>
<reference key="3">
    <citation type="journal article" date="2004" name="Genome Res.">
        <title>Whole genome sequence comparisons and 'full-length' cDNA sequences: a combined approach to evaluate and improve Arabidopsis genome annotation.</title>
        <authorList>
            <person name="Castelli V."/>
            <person name="Aury J.-M."/>
            <person name="Jaillon O."/>
            <person name="Wincker P."/>
            <person name="Clepet C."/>
            <person name="Menard M."/>
            <person name="Cruaud C."/>
            <person name="Quetier F."/>
            <person name="Scarpelli C."/>
            <person name="Schaechter V."/>
            <person name="Temple G."/>
            <person name="Caboche M."/>
            <person name="Weissenbach J."/>
            <person name="Salanoubat M."/>
        </authorList>
    </citation>
    <scope>NUCLEOTIDE SEQUENCE [LARGE SCALE MRNA]</scope>
    <source>
        <strain>cv. Columbia</strain>
    </source>
</reference>
<reference key="4">
    <citation type="journal article" date="2003" name="Science">
        <title>Empirical analysis of transcriptional activity in the Arabidopsis genome.</title>
        <authorList>
            <person name="Yamada K."/>
            <person name="Lim J."/>
            <person name="Dale J.M."/>
            <person name="Chen H."/>
            <person name="Shinn P."/>
            <person name="Palm C.J."/>
            <person name="Southwick A.M."/>
            <person name="Wu H.C."/>
            <person name="Kim C.J."/>
            <person name="Nguyen M."/>
            <person name="Pham P.K."/>
            <person name="Cheuk R.F."/>
            <person name="Karlin-Newmann G."/>
            <person name="Liu S.X."/>
            <person name="Lam B."/>
            <person name="Sakano H."/>
            <person name="Wu T."/>
            <person name="Yu G."/>
            <person name="Miranda M."/>
            <person name="Quach H.L."/>
            <person name="Tripp M."/>
            <person name="Chang C.H."/>
            <person name="Lee J.M."/>
            <person name="Toriumi M.J."/>
            <person name="Chan M.M."/>
            <person name="Tang C.C."/>
            <person name="Onodera C.S."/>
            <person name="Deng J.M."/>
            <person name="Akiyama K."/>
            <person name="Ansari Y."/>
            <person name="Arakawa T."/>
            <person name="Banh J."/>
            <person name="Banno F."/>
            <person name="Bowser L."/>
            <person name="Brooks S.Y."/>
            <person name="Carninci P."/>
            <person name="Chao Q."/>
            <person name="Choy N."/>
            <person name="Enju A."/>
            <person name="Goldsmith A.D."/>
            <person name="Gurjal M."/>
            <person name="Hansen N.F."/>
            <person name="Hayashizaki Y."/>
            <person name="Johnson-Hopson C."/>
            <person name="Hsuan V.W."/>
            <person name="Iida K."/>
            <person name="Karnes M."/>
            <person name="Khan S."/>
            <person name="Koesema E."/>
            <person name="Ishida J."/>
            <person name="Jiang P.X."/>
            <person name="Jones T."/>
            <person name="Kawai J."/>
            <person name="Kamiya A."/>
            <person name="Meyers C."/>
            <person name="Nakajima M."/>
            <person name="Narusaka M."/>
            <person name="Seki M."/>
            <person name="Sakurai T."/>
            <person name="Satou M."/>
            <person name="Tamse R."/>
            <person name="Vaysberg M."/>
            <person name="Wallender E.K."/>
            <person name="Wong C."/>
            <person name="Yamamura Y."/>
            <person name="Yuan S."/>
            <person name="Shinozaki K."/>
            <person name="Davis R.W."/>
            <person name="Theologis A."/>
            <person name="Ecker J.R."/>
        </authorList>
    </citation>
    <scope>NUCLEOTIDE SEQUENCE [LARGE SCALE MRNA] OF 142-384</scope>
    <source>
        <strain>cv. Columbia</strain>
    </source>
</reference>
<protein>
    <recommendedName>
        <fullName>Probable fructokinase-6, chloroplastic</fullName>
        <ecNumber>2.7.1.4</ecNumber>
    </recommendedName>
</protein>
<organism>
    <name type="scientific">Arabidopsis thaliana</name>
    <name type="common">Mouse-ear cress</name>
    <dbReference type="NCBI Taxonomy" id="3702"/>
    <lineage>
        <taxon>Eukaryota</taxon>
        <taxon>Viridiplantae</taxon>
        <taxon>Streptophyta</taxon>
        <taxon>Embryophyta</taxon>
        <taxon>Tracheophyta</taxon>
        <taxon>Spermatophyta</taxon>
        <taxon>Magnoliopsida</taxon>
        <taxon>eudicotyledons</taxon>
        <taxon>Gunneridae</taxon>
        <taxon>Pentapetalae</taxon>
        <taxon>rosids</taxon>
        <taxon>malvids</taxon>
        <taxon>Brassicales</taxon>
        <taxon>Brassicaceae</taxon>
        <taxon>Camelineae</taxon>
        <taxon>Arabidopsis</taxon>
    </lineage>
</organism>
<comment type="function">
    <text evidence="1">May play an important role in maintaining the flux of carbon towards starch formation.</text>
</comment>
<comment type="catalytic activity">
    <reaction>
        <text>D-fructose + ATP = D-fructose 6-phosphate + ADP + H(+)</text>
        <dbReference type="Rhea" id="RHEA:16125"/>
        <dbReference type="ChEBI" id="CHEBI:15378"/>
        <dbReference type="ChEBI" id="CHEBI:30616"/>
        <dbReference type="ChEBI" id="CHEBI:37721"/>
        <dbReference type="ChEBI" id="CHEBI:61527"/>
        <dbReference type="ChEBI" id="CHEBI:456216"/>
        <dbReference type="EC" id="2.7.1.4"/>
    </reaction>
</comment>
<comment type="pathway">
    <text>Glycan biosynthesis; starch biosynthesis.</text>
</comment>
<comment type="subcellular location">
    <subcellularLocation>
        <location evidence="2">Plastid</location>
        <location evidence="2">Chloroplast</location>
    </subcellularLocation>
</comment>
<comment type="similarity">
    <text evidence="3">Belongs to the carbohydrate kinase PfkB family.</text>
</comment>
<name>SCRK6_ARATH</name>
<keyword id="KW-0067">ATP-binding</keyword>
<keyword id="KW-0119">Carbohydrate metabolism</keyword>
<keyword id="KW-0150">Chloroplast</keyword>
<keyword id="KW-0418">Kinase</keyword>
<keyword id="KW-0547">Nucleotide-binding</keyword>
<keyword id="KW-0934">Plastid</keyword>
<keyword id="KW-1185">Reference proteome</keyword>
<keyword id="KW-0808">Transferase</keyword>
<keyword id="KW-0809">Transit peptide</keyword>
<proteinExistence type="evidence at transcript level"/>
<accession>Q9C524</accession>
<accession>Q8H119</accession>
<accession>Q94K38</accession>
<gene>
    <name evidence="6" type="ordered locus">At1g66430</name>
    <name evidence="7" type="ORF">F28G11.11</name>
    <name evidence="8" type="ORF">T27F4.17</name>
</gene>